<sequence>MSWQAYVDDHLMCDIEGHEDHRLTAAAIVGHDGSVWAQSATFPQFKPEEMNGIMTDFNEPGHLAPTGLHLGGTKYMVIQGEAGAVIRGKKGSGGITIKKTGQALVFGIYEEPVTPGQCNMVVEGLGDYLLEQGL</sequence>
<keyword id="KW-0009">Actin-binding</keyword>
<keyword id="KW-0020">Allergen</keyword>
<keyword id="KW-0963">Cytoplasm</keyword>
<keyword id="KW-0206">Cytoskeleton</keyword>
<keyword id="KW-1015">Disulfide bond</keyword>
<keyword id="KW-0597">Phosphoprotein</keyword>
<comment type="function">
    <text evidence="1">Binds to actin and affects the structure of the cytoskeleton. At high concentrations, profilin prevents the polymerization of actin, whereas it enhances it at low concentrations (By similarity).</text>
</comment>
<comment type="subunit">
    <text evidence="1">Occurs in many kinds of cells as a complex with monomeric actin in a 1:1 ratio.</text>
</comment>
<comment type="subcellular location">
    <subcellularLocation>
        <location evidence="1">Cytoplasm</location>
        <location evidence="1">Cytoskeleton</location>
    </subcellularLocation>
</comment>
<comment type="PTM">
    <text evidence="1">Phosphorylated by MAP kinases.</text>
</comment>
<comment type="polymorphism">
    <text>Several isoforms of the allergen exist due to polymorphism.</text>
</comment>
<comment type="allergen">
    <text>Causes an allergic reaction in human.</text>
</comment>
<comment type="miscellaneous">
    <text evidence="3">The variability of the residues taking part of IgE-binding epitopes might be responsible of the difference in cross-reactivity among olive pollen cultivars, and between distantly related pollen species, leading to a variable range of allergy reactions among atopic patients.</text>
</comment>
<comment type="similarity">
    <text evidence="2">Belongs to the profilin family.</text>
</comment>
<feature type="initiator methionine" description="Removed" evidence="1">
    <location>
        <position position="1"/>
    </location>
</feature>
<feature type="chain" id="PRO_0000425013" description="Profilin-4">
    <location>
        <begin position="2"/>
        <end position="134"/>
    </location>
</feature>
<feature type="short sequence motif" description="Involved in PIP2 interaction">
    <location>
        <begin position="84"/>
        <end position="100"/>
    </location>
</feature>
<feature type="modified residue" description="Phosphothreonine" evidence="1">
    <location>
        <position position="114"/>
    </location>
</feature>
<feature type="disulfide bond" evidence="3">
    <location>
        <begin position="13"/>
        <end position="118"/>
    </location>
</feature>
<dbReference type="EMBL" id="DQ138334">
    <property type="protein sequence ID" value="AAZ30412.1"/>
    <property type="molecule type" value="mRNA"/>
</dbReference>
<dbReference type="SMR" id="A4GDR6"/>
<dbReference type="Allergome" id="490">
    <property type="allergen name" value="Ole e 2"/>
</dbReference>
<dbReference type="GO" id="GO:0005938">
    <property type="term" value="C:cell cortex"/>
    <property type="evidence" value="ECO:0007669"/>
    <property type="project" value="TreeGrafter"/>
</dbReference>
<dbReference type="GO" id="GO:0005856">
    <property type="term" value="C:cytoskeleton"/>
    <property type="evidence" value="ECO:0007669"/>
    <property type="project" value="UniProtKB-SubCell"/>
</dbReference>
<dbReference type="GO" id="GO:0003785">
    <property type="term" value="F:actin monomer binding"/>
    <property type="evidence" value="ECO:0007669"/>
    <property type="project" value="TreeGrafter"/>
</dbReference>
<dbReference type="CDD" id="cd00148">
    <property type="entry name" value="PROF"/>
    <property type="match status" value="1"/>
</dbReference>
<dbReference type="FunFam" id="3.30.450.30:FF:000001">
    <property type="entry name" value="Profilin"/>
    <property type="match status" value="1"/>
</dbReference>
<dbReference type="Gene3D" id="3.30.450.30">
    <property type="entry name" value="Dynein light chain 2a, cytoplasmic"/>
    <property type="match status" value="1"/>
</dbReference>
<dbReference type="InterPro" id="IPR048278">
    <property type="entry name" value="PFN"/>
</dbReference>
<dbReference type="InterPro" id="IPR005455">
    <property type="entry name" value="PFN_euk"/>
</dbReference>
<dbReference type="InterPro" id="IPR036140">
    <property type="entry name" value="PFN_sf"/>
</dbReference>
<dbReference type="InterPro" id="IPR027310">
    <property type="entry name" value="Profilin_CS"/>
</dbReference>
<dbReference type="PANTHER" id="PTHR11604">
    <property type="entry name" value="PROFILIN"/>
    <property type="match status" value="1"/>
</dbReference>
<dbReference type="PANTHER" id="PTHR11604:SF25">
    <property type="entry name" value="PROFILIN-5"/>
    <property type="match status" value="1"/>
</dbReference>
<dbReference type="Pfam" id="PF00235">
    <property type="entry name" value="Profilin"/>
    <property type="match status" value="1"/>
</dbReference>
<dbReference type="PRINTS" id="PR00392">
    <property type="entry name" value="PROFILIN"/>
</dbReference>
<dbReference type="PRINTS" id="PR01640">
    <property type="entry name" value="PROFILINPLNT"/>
</dbReference>
<dbReference type="SMART" id="SM00392">
    <property type="entry name" value="PROF"/>
    <property type="match status" value="1"/>
</dbReference>
<dbReference type="SUPFAM" id="SSF55770">
    <property type="entry name" value="Profilin (actin-binding protein)"/>
    <property type="match status" value="1"/>
</dbReference>
<dbReference type="PROSITE" id="PS00414">
    <property type="entry name" value="PROFILIN"/>
    <property type="match status" value="1"/>
</dbReference>
<reference key="1">
    <citation type="journal article" date="2012" name="PLoS ONE">
        <title>Characterization of profilin polymorphism in pollen with a focus on multifunctionality.</title>
        <authorList>
            <person name="Jimenez-Lopez J.C."/>
            <person name="Morales S."/>
            <person name="Castro A.J."/>
            <person name="Volkmann D."/>
            <person name="Rodriguez-Garcia M.I."/>
            <person name="Alche Jde D."/>
        </authorList>
    </citation>
    <scope>NUCLEOTIDE SEQUENCE [MRNA]</scope>
    <scope>POLYMORPHISM</scope>
    <source>
        <strain>cv. Cornicabra</strain>
    </source>
</reference>
<reference key="2">
    <citation type="journal article" date="2013" name="PLoS ONE">
        <title>Analysis of the effects of polymorphism on pollen profilin structural functionality and the generation of conformational, T- and B-cell epitopes.</title>
        <authorList>
            <person name="Jimenez-Lopez J.C."/>
            <person name="Rodriguez-Garcia M.I."/>
            <person name="Alche J.D."/>
        </authorList>
    </citation>
    <scope>3D-STRUCTURE MODELING</scope>
    <scope>DISULFIDE BOND</scope>
</reference>
<accession>A4GDR6</accession>
<name>PROAV_OLEEU</name>
<organism>
    <name type="scientific">Olea europaea</name>
    <name type="common">Common olive</name>
    <dbReference type="NCBI Taxonomy" id="4146"/>
    <lineage>
        <taxon>Eukaryota</taxon>
        <taxon>Viridiplantae</taxon>
        <taxon>Streptophyta</taxon>
        <taxon>Embryophyta</taxon>
        <taxon>Tracheophyta</taxon>
        <taxon>Spermatophyta</taxon>
        <taxon>Magnoliopsida</taxon>
        <taxon>eudicotyledons</taxon>
        <taxon>Gunneridae</taxon>
        <taxon>Pentapetalae</taxon>
        <taxon>asterids</taxon>
        <taxon>lamiids</taxon>
        <taxon>Lamiales</taxon>
        <taxon>Oleaceae</taxon>
        <taxon>Oleeae</taxon>
        <taxon>Olea</taxon>
    </lineage>
</organism>
<proteinExistence type="evidence at protein level"/>
<evidence type="ECO:0000250" key="1"/>
<evidence type="ECO:0000305" key="2"/>
<evidence type="ECO:0000305" key="3">
    <source>
    </source>
</evidence>
<protein>
    <recommendedName>
        <fullName>Profilin-4</fullName>
    </recommendedName>
    <alternativeName>
        <fullName>Pollen allergen Ole e 2</fullName>
    </alternativeName>
    <allergenName>Ole e 2</allergenName>
</protein>